<name>RPOC_CUPMC</name>
<gene>
    <name evidence="1" type="primary">rpoC</name>
    <name type="ordered locus">Rmet_3333</name>
</gene>
<comment type="function">
    <text evidence="1">DNA-dependent RNA polymerase catalyzes the transcription of DNA into RNA using the four ribonucleoside triphosphates as substrates.</text>
</comment>
<comment type="catalytic activity">
    <reaction evidence="1">
        <text>RNA(n) + a ribonucleoside 5'-triphosphate = RNA(n+1) + diphosphate</text>
        <dbReference type="Rhea" id="RHEA:21248"/>
        <dbReference type="Rhea" id="RHEA-COMP:14527"/>
        <dbReference type="Rhea" id="RHEA-COMP:17342"/>
        <dbReference type="ChEBI" id="CHEBI:33019"/>
        <dbReference type="ChEBI" id="CHEBI:61557"/>
        <dbReference type="ChEBI" id="CHEBI:140395"/>
        <dbReference type="EC" id="2.7.7.6"/>
    </reaction>
</comment>
<comment type="cofactor">
    <cofactor evidence="1">
        <name>Mg(2+)</name>
        <dbReference type="ChEBI" id="CHEBI:18420"/>
    </cofactor>
    <text evidence="1">Binds 1 Mg(2+) ion per subunit.</text>
</comment>
<comment type="cofactor">
    <cofactor evidence="1">
        <name>Zn(2+)</name>
        <dbReference type="ChEBI" id="CHEBI:29105"/>
    </cofactor>
    <text evidence="1">Binds 2 Zn(2+) ions per subunit.</text>
</comment>
<comment type="subunit">
    <text evidence="1">The RNAP catalytic core consists of 2 alpha, 1 beta, 1 beta' and 1 omega subunit. When a sigma factor is associated with the core the holoenzyme is formed, which can initiate transcription.</text>
</comment>
<comment type="similarity">
    <text evidence="1">Belongs to the RNA polymerase beta' chain family.</text>
</comment>
<feature type="chain" id="PRO_0000353414" description="DNA-directed RNA polymerase subunit beta'">
    <location>
        <begin position="1"/>
        <end position="1413"/>
    </location>
</feature>
<feature type="binding site" evidence="1">
    <location>
        <position position="70"/>
    </location>
    <ligand>
        <name>Zn(2+)</name>
        <dbReference type="ChEBI" id="CHEBI:29105"/>
        <label>1</label>
    </ligand>
</feature>
<feature type="binding site" evidence="1">
    <location>
        <position position="72"/>
    </location>
    <ligand>
        <name>Zn(2+)</name>
        <dbReference type="ChEBI" id="CHEBI:29105"/>
        <label>1</label>
    </ligand>
</feature>
<feature type="binding site" evidence="1">
    <location>
        <position position="85"/>
    </location>
    <ligand>
        <name>Zn(2+)</name>
        <dbReference type="ChEBI" id="CHEBI:29105"/>
        <label>1</label>
    </ligand>
</feature>
<feature type="binding site" evidence="1">
    <location>
        <position position="88"/>
    </location>
    <ligand>
        <name>Zn(2+)</name>
        <dbReference type="ChEBI" id="CHEBI:29105"/>
        <label>1</label>
    </ligand>
</feature>
<feature type="binding site" evidence="1">
    <location>
        <position position="461"/>
    </location>
    <ligand>
        <name>Mg(2+)</name>
        <dbReference type="ChEBI" id="CHEBI:18420"/>
    </ligand>
</feature>
<feature type="binding site" evidence="1">
    <location>
        <position position="463"/>
    </location>
    <ligand>
        <name>Mg(2+)</name>
        <dbReference type="ChEBI" id="CHEBI:18420"/>
    </ligand>
</feature>
<feature type="binding site" evidence="1">
    <location>
        <position position="465"/>
    </location>
    <ligand>
        <name>Mg(2+)</name>
        <dbReference type="ChEBI" id="CHEBI:18420"/>
    </ligand>
</feature>
<feature type="binding site" evidence="1">
    <location>
        <position position="820"/>
    </location>
    <ligand>
        <name>Zn(2+)</name>
        <dbReference type="ChEBI" id="CHEBI:29105"/>
        <label>2</label>
    </ligand>
</feature>
<feature type="binding site" evidence="1">
    <location>
        <position position="894"/>
    </location>
    <ligand>
        <name>Zn(2+)</name>
        <dbReference type="ChEBI" id="CHEBI:29105"/>
        <label>2</label>
    </ligand>
</feature>
<feature type="binding site" evidence="1">
    <location>
        <position position="901"/>
    </location>
    <ligand>
        <name>Zn(2+)</name>
        <dbReference type="ChEBI" id="CHEBI:29105"/>
        <label>2</label>
    </ligand>
</feature>
<feature type="binding site" evidence="1">
    <location>
        <position position="904"/>
    </location>
    <ligand>
        <name>Zn(2+)</name>
        <dbReference type="ChEBI" id="CHEBI:29105"/>
        <label>2</label>
    </ligand>
</feature>
<dbReference type="EC" id="2.7.7.6" evidence="1"/>
<dbReference type="EMBL" id="CP000352">
    <property type="protein sequence ID" value="ABF10205.1"/>
    <property type="molecule type" value="Genomic_DNA"/>
</dbReference>
<dbReference type="RefSeq" id="WP_011517781.1">
    <property type="nucleotide sequence ID" value="NC_007973.1"/>
</dbReference>
<dbReference type="SMR" id="Q1LI21"/>
<dbReference type="STRING" id="266264.Rmet_3333"/>
<dbReference type="KEGG" id="rme:Rmet_3333"/>
<dbReference type="eggNOG" id="COG0086">
    <property type="taxonomic scope" value="Bacteria"/>
</dbReference>
<dbReference type="HOGENOM" id="CLU_000524_3_1_4"/>
<dbReference type="Proteomes" id="UP000002429">
    <property type="component" value="Chromosome"/>
</dbReference>
<dbReference type="GO" id="GO:0000428">
    <property type="term" value="C:DNA-directed RNA polymerase complex"/>
    <property type="evidence" value="ECO:0007669"/>
    <property type="project" value="UniProtKB-KW"/>
</dbReference>
<dbReference type="GO" id="GO:0003677">
    <property type="term" value="F:DNA binding"/>
    <property type="evidence" value="ECO:0007669"/>
    <property type="project" value="UniProtKB-UniRule"/>
</dbReference>
<dbReference type="GO" id="GO:0003899">
    <property type="term" value="F:DNA-directed RNA polymerase activity"/>
    <property type="evidence" value="ECO:0007669"/>
    <property type="project" value="UniProtKB-UniRule"/>
</dbReference>
<dbReference type="GO" id="GO:0000287">
    <property type="term" value="F:magnesium ion binding"/>
    <property type="evidence" value="ECO:0007669"/>
    <property type="project" value="UniProtKB-UniRule"/>
</dbReference>
<dbReference type="GO" id="GO:0008270">
    <property type="term" value="F:zinc ion binding"/>
    <property type="evidence" value="ECO:0007669"/>
    <property type="project" value="UniProtKB-UniRule"/>
</dbReference>
<dbReference type="GO" id="GO:0006351">
    <property type="term" value="P:DNA-templated transcription"/>
    <property type="evidence" value="ECO:0007669"/>
    <property type="project" value="UniProtKB-UniRule"/>
</dbReference>
<dbReference type="CDD" id="cd02655">
    <property type="entry name" value="RNAP_beta'_C"/>
    <property type="match status" value="1"/>
</dbReference>
<dbReference type="CDD" id="cd01609">
    <property type="entry name" value="RNAP_beta'_N"/>
    <property type="match status" value="1"/>
</dbReference>
<dbReference type="FunFam" id="1.10.132.30:FF:000003">
    <property type="entry name" value="DNA-directed RNA polymerase subunit beta"/>
    <property type="match status" value="1"/>
</dbReference>
<dbReference type="FunFam" id="1.10.150.390:FF:000002">
    <property type="entry name" value="DNA-directed RNA polymerase subunit beta"/>
    <property type="match status" value="1"/>
</dbReference>
<dbReference type="FunFam" id="4.10.860.120:FF:000001">
    <property type="entry name" value="DNA-directed RNA polymerase subunit beta"/>
    <property type="match status" value="1"/>
</dbReference>
<dbReference type="Gene3D" id="1.10.132.30">
    <property type="match status" value="1"/>
</dbReference>
<dbReference type="Gene3D" id="1.10.150.390">
    <property type="match status" value="1"/>
</dbReference>
<dbReference type="Gene3D" id="1.10.1790.20">
    <property type="match status" value="1"/>
</dbReference>
<dbReference type="Gene3D" id="1.10.40.90">
    <property type="match status" value="1"/>
</dbReference>
<dbReference type="Gene3D" id="2.40.40.20">
    <property type="match status" value="1"/>
</dbReference>
<dbReference type="Gene3D" id="2.40.50.100">
    <property type="match status" value="3"/>
</dbReference>
<dbReference type="Gene3D" id="4.10.860.120">
    <property type="entry name" value="RNA polymerase II, clamp domain"/>
    <property type="match status" value="1"/>
</dbReference>
<dbReference type="Gene3D" id="1.10.274.100">
    <property type="entry name" value="RNA polymerase Rpb1, domain 3"/>
    <property type="match status" value="1"/>
</dbReference>
<dbReference type="HAMAP" id="MF_01322">
    <property type="entry name" value="RNApol_bact_RpoC"/>
    <property type="match status" value="1"/>
</dbReference>
<dbReference type="InterPro" id="IPR045867">
    <property type="entry name" value="DNA-dir_RpoC_beta_prime"/>
</dbReference>
<dbReference type="InterPro" id="IPR012754">
    <property type="entry name" value="DNA-dir_RpoC_beta_prime_bact"/>
</dbReference>
<dbReference type="InterPro" id="IPR000722">
    <property type="entry name" value="RNA_pol_asu"/>
</dbReference>
<dbReference type="InterPro" id="IPR006592">
    <property type="entry name" value="RNA_pol_N"/>
</dbReference>
<dbReference type="InterPro" id="IPR007080">
    <property type="entry name" value="RNA_pol_Rpb1_1"/>
</dbReference>
<dbReference type="InterPro" id="IPR007066">
    <property type="entry name" value="RNA_pol_Rpb1_3"/>
</dbReference>
<dbReference type="InterPro" id="IPR042102">
    <property type="entry name" value="RNA_pol_Rpb1_3_sf"/>
</dbReference>
<dbReference type="InterPro" id="IPR007083">
    <property type="entry name" value="RNA_pol_Rpb1_4"/>
</dbReference>
<dbReference type="InterPro" id="IPR007081">
    <property type="entry name" value="RNA_pol_Rpb1_5"/>
</dbReference>
<dbReference type="InterPro" id="IPR044893">
    <property type="entry name" value="RNA_pol_Rpb1_clamp_domain"/>
</dbReference>
<dbReference type="InterPro" id="IPR038120">
    <property type="entry name" value="Rpb1_funnel_sf"/>
</dbReference>
<dbReference type="NCBIfam" id="TIGR02386">
    <property type="entry name" value="rpoC_TIGR"/>
    <property type="match status" value="1"/>
</dbReference>
<dbReference type="PANTHER" id="PTHR19376">
    <property type="entry name" value="DNA-DIRECTED RNA POLYMERASE"/>
    <property type="match status" value="1"/>
</dbReference>
<dbReference type="PANTHER" id="PTHR19376:SF54">
    <property type="entry name" value="DNA-DIRECTED RNA POLYMERASE SUBUNIT BETA"/>
    <property type="match status" value="1"/>
</dbReference>
<dbReference type="Pfam" id="PF04997">
    <property type="entry name" value="RNA_pol_Rpb1_1"/>
    <property type="match status" value="1"/>
</dbReference>
<dbReference type="Pfam" id="PF00623">
    <property type="entry name" value="RNA_pol_Rpb1_2"/>
    <property type="match status" value="1"/>
</dbReference>
<dbReference type="Pfam" id="PF04983">
    <property type="entry name" value="RNA_pol_Rpb1_3"/>
    <property type="match status" value="1"/>
</dbReference>
<dbReference type="Pfam" id="PF05000">
    <property type="entry name" value="RNA_pol_Rpb1_4"/>
    <property type="match status" value="1"/>
</dbReference>
<dbReference type="Pfam" id="PF04998">
    <property type="entry name" value="RNA_pol_Rpb1_5"/>
    <property type="match status" value="1"/>
</dbReference>
<dbReference type="SMART" id="SM00663">
    <property type="entry name" value="RPOLA_N"/>
    <property type="match status" value="1"/>
</dbReference>
<dbReference type="SUPFAM" id="SSF64484">
    <property type="entry name" value="beta and beta-prime subunits of DNA dependent RNA-polymerase"/>
    <property type="match status" value="1"/>
</dbReference>
<organism>
    <name type="scientific">Cupriavidus metallidurans (strain ATCC 43123 / DSM 2839 / NBRC 102507 / CH34)</name>
    <name type="common">Ralstonia metallidurans</name>
    <dbReference type="NCBI Taxonomy" id="266264"/>
    <lineage>
        <taxon>Bacteria</taxon>
        <taxon>Pseudomonadati</taxon>
        <taxon>Pseudomonadota</taxon>
        <taxon>Betaproteobacteria</taxon>
        <taxon>Burkholderiales</taxon>
        <taxon>Burkholderiaceae</taxon>
        <taxon>Cupriavidus</taxon>
    </lineage>
</organism>
<accession>Q1LI21</accession>
<proteinExistence type="inferred from homology"/>
<keyword id="KW-0240">DNA-directed RNA polymerase</keyword>
<keyword id="KW-0460">Magnesium</keyword>
<keyword id="KW-0479">Metal-binding</keyword>
<keyword id="KW-0548">Nucleotidyltransferase</keyword>
<keyword id="KW-1185">Reference proteome</keyword>
<keyword id="KW-0804">Transcription</keyword>
<keyword id="KW-0808">Transferase</keyword>
<keyword id="KW-0862">Zinc</keyword>
<sequence>MKALLDLFKQVQQEEQFDAIKIGLASPEKIRSWSYGEVKKPETINYRTFKPERDGLFCAKIFGPIKDYECLCGKYKRLKHRGVICEKCGVEVTLAKVRRERMGHIELAAPTAHIWFLKSLPSRLGMVLDMTLRDIERVLYFEAFVVLEPGMTPLKKSQIMSEDDYIAKCDEYGEGEFVAMMGAEGIRELLRGIDIEKQIEQIRAELQATGSEAKIKKFAKRLKVLEAFQRSGIKPEWMILEVLPVLPPELRPLVPLDGGRFATSDLNDLYRRVINRNNRLKRLLELKAPEIIVRNEKRMLQEAVDSLLDNGRRGKAMTGANKRPLKSLAEMIKGKGGRFRQNLLGKRVDYSGRSVIVVGPTLKLHQCGLPKLMALELFKPFIFHKLETMGIATTIKAAKKEVESQTPVVWDILEEVIREHPVMLNRAPTLHRLGIQAFEPVLIEGKAIQLHPLVCAAFNADFDGDQMAVHVPLSLEAQMEARTLMLASNNVLFPANGDPSIVPSQDVVLGLYYTTRDKINGKGEGMTFADISEVIRAYENKEVELASRVNVRITEYEVVNKDADGDARFAPKITLQATTVGRSILSEILPKGLPFSVLNKPLKKKEISRLINTAFRKCGLRETVIFADKLLQSGFRLATRAGISIAIDDMLVPPQKEKIISDAAAKVKEYDKQYMSGLVTDQERYNNVVDIWGAAGDQVGKAMMEQLQHEDVVDRTGATVKQESFNSIYMMADSGARGSAAQIRQLAGMRGLMAKPDGSIIETPITANFREGLNVLQYFISTHGARKGLADTALKTANSGYLTRRLVDVTQDLVVVEDDCGTSNGVAMKALVEGGEVIEALRDRILGRVTVADVVNPETQETAIETGTLLDEDLVELIDAIGVDEVKVRTPLSCDTRYGLCGKCYGRDLGRGVLVNSGEAVGVIAAQSIGEPGTQLTMRTFHIGGAASRAAVASSVEAKATGTVRFTATMRYVTNTKGELIVISRSGEALITDDHGRERERHKIPYGATLLVQDGQAIKAGTQLATWDALTRPIVSEYTGTTKFENVEEGVTVAKQMDEVTGLSTLVVIDAKRRTAATKGLRPQVKLLDANNQEVKIPGTDHSVTIGFQVGALITVKDGQQVHVGEVLARIPTESQKTRDITGGLPRVAELFEARSPKDAAVLAEVTGTVSFGKDTKGKQRLVITDLDGNAHEFLIAKEKQVLVHDGQVVNKGEMIVEGPADPHDILRLKGIEELAHYIVDEVQDVYRLQGVKINDKHIEVIVRQMLRRVQIADVGDTKFIPGEQVERSELLDENDRVIADGKRPATHENLLLGITKASLSTDSFISAASFQETTRVLTEAAIMGKTDDLRGLKENVIVGRLIPAGTGLAYHRARKAREAAERERAQAISDEEQSLFIEPPVVQATEGEGDAV</sequence>
<protein>
    <recommendedName>
        <fullName evidence="1">DNA-directed RNA polymerase subunit beta'</fullName>
        <shortName evidence="1">RNAP subunit beta'</shortName>
        <ecNumber evidence="1">2.7.7.6</ecNumber>
    </recommendedName>
    <alternativeName>
        <fullName evidence="1">RNA polymerase subunit beta'</fullName>
    </alternativeName>
    <alternativeName>
        <fullName evidence="1">Transcriptase subunit beta'</fullName>
    </alternativeName>
</protein>
<evidence type="ECO:0000255" key="1">
    <source>
        <dbReference type="HAMAP-Rule" id="MF_01322"/>
    </source>
</evidence>
<reference key="1">
    <citation type="journal article" date="2010" name="PLoS ONE">
        <title>The complete genome sequence of Cupriavidus metallidurans strain CH34, a master survivalist in harsh and anthropogenic environments.</title>
        <authorList>
            <person name="Janssen P.J."/>
            <person name="Van Houdt R."/>
            <person name="Moors H."/>
            <person name="Monsieurs P."/>
            <person name="Morin N."/>
            <person name="Michaux A."/>
            <person name="Benotmane M.A."/>
            <person name="Leys N."/>
            <person name="Vallaeys T."/>
            <person name="Lapidus A."/>
            <person name="Monchy S."/>
            <person name="Medigue C."/>
            <person name="Taghavi S."/>
            <person name="McCorkle S."/>
            <person name="Dunn J."/>
            <person name="van der Lelie D."/>
            <person name="Mergeay M."/>
        </authorList>
    </citation>
    <scope>NUCLEOTIDE SEQUENCE [LARGE SCALE GENOMIC DNA]</scope>
    <source>
        <strain>ATCC 43123 / DSM 2839 / NBRC 102507 / CH34</strain>
    </source>
</reference>